<name>NADK_METLZ</name>
<feature type="chain" id="PRO_1000059879" description="NAD kinase">
    <location>
        <begin position="1"/>
        <end position="271"/>
    </location>
</feature>
<feature type="active site" description="Proton acceptor" evidence="1">
    <location>
        <position position="64"/>
    </location>
</feature>
<feature type="binding site" evidence="1">
    <location>
        <begin position="64"/>
        <end position="65"/>
    </location>
    <ligand>
        <name>NAD(+)</name>
        <dbReference type="ChEBI" id="CHEBI:57540"/>
    </ligand>
</feature>
<feature type="binding site" evidence="1">
    <location>
        <position position="69"/>
    </location>
    <ligand>
        <name>NAD(+)</name>
        <dbReference type="ChEBI" id="CHEBI:57540"/>
    </ligand>
</feature>
<feature type="binding site" evidence="1">
    <location>
        <begin position="132"/>
        <end position="133"/>
    </location>
    <ligand>
        <name>NAD(+)</name>
        <dbReference type="ChEBI" id="CHEBI:57540"/>
    </ligand>
</feature>
<feature type="binding site" evidence="1">
    <location>
        <position position="143"/>
    </location>
    <ligand>
        <name>NAD(+)</name>
        <dbReference type="ChEBI" id="CHEBI:57540"/>
    </ligand>
</feature>
<feature type="binding site" evidence="1">
    <location>
        <position position="160"/>
    </location>
    <ligand>
        <name>NAD(+)</name>
        <dbReference type="ChEBI" id="CHEBI:57540"/>
    </ligand>
</feature>
<feature type="binding site" evidence="1">
    <location>
        <position position="162"/>
    </location>
    <ligand>
        <name>NAD(+)</name>
        <dbReference type="ChEBI" id="CHEBI:57540"/>
    </ligand>
</feature>
<feature type="binding site" evidence="1">
    <location>
        <begin position="173"/>
        <end position="178"/>
    </location>
    <ligand>
        <name>NAD(+)</name>
        <dbReference type="ChEBI" id="CHEBI:57540"/>
    </ligand>
</feature>
<feature type="binding site" evidence="1">
    <location>
        <position position="197"/>
    </location>
    <ligand>
        <name>NAD(+)</name>
        <dbReference type="ChEBI" id="CHEBI:57540"/>
    </ligand>
</feature>
<feature type="binding site" evidence="1">
    <location>
        <position position="231"/>
    </location>
    <ligand>
        <name>NAD(+)</name>
        <dbReference type="ChEBI" id="CHEBI:57540"/>
    </ligand>
</feature>
<organism>
    <name type="scientific">Methanocorpusculum labreanum (strain ATCC 43576 / DSM 4855 / Z)</name>
    <dbReference type="NCBI Taxonomy" id="410358"/>
    <lineage>
        <taxon>Archaea</taxon>
        <taxon>Methanobacteriati</taxon>
        <taxon>Methanobacteriota</taxon>
        <taxon>Stenosarchaea group</taxon>
        <taxon>Methanomicrobia</taxon>
        <taxon>Methanomicrobiales</taxon>
        <taxon>Methanocorpusculaceae</taxon>
        <taxon>Methanocorpusculum</taxon>
    </lineage>
</organism>
<dbReference type="EC" id="2.7.1.23" evidence="1"/>
<dbReference type="EMBL" id="CP000559">
    <property type="protein sequence ID" value="ABN06604.1"/>
    <property type="molecule type" value="Genomic_DNA"/>
</dbReference>
<dbReference type="RefSeq" id="WP_011832805.1">
    <property type="nucleotide sequence ID" value="NC_008942.1"/>
</dbReference>
<dbReference type="SMR" id="A2SQJ8"/>
<dbReference type="STRING" id="410358.Mlab_0428"/>
<dbReference type="GeneID" id="4794383"/>
<dbReference type="KEGG" id="mla:Mlab_0428"/>
<dbReference type="eggNOG" id="arCOG01348">
    <property type="taxonomic scope" value="Archaea"/>
</dbReference>
<dbReference type="HOGENOM" id="CLU_008831_0_2_2"/>
<dbReference type="OrthoDB" id="77798at2157"/>
<dbReference type="Proteomes" id="UP000000365">
    <property type="component" value="Chromosome"/>
</dbReference>
<dbReference type="GO" id="GO:0005737">
    <property type="term" value="C:cytoplasm"/>
    <property type="evidence" value="ECO:0007669"/>
    <property type="project" value="UniProtKB-SubCell"/>
</dbReference>
<dbReference type="GO" id="GO:0005524">
    <property type="term" value="F:ATP binding"/>
    <property type="evidence" value="ECO:0007669"/>
    <property type="project" value="UniProtKB-KW"/>
</dbReference>
<dbReference type="GO" id="GO:0046872">
    <property type="term" value="F:metal ion binding"/>
    <property type="evidence" value="ECO:0007669"/>
    <property type="project" value="UniProtKB-UniRule"/>
</dbReference>
<dbReference type="GO" id="GO:0003951">
    <property type="term" value="F:NAD+ kinase activity"/>
    <property type="evidence" value="ECO:0007669"/>
    <property type="project" value="UniProtKB-UniRule"/>
</dbReference>
<dbReference type="GO" id="GO:0019674">
    <property type="term" value="P:NAD metabolic process"/>
    <property type="evidence" value="ECO:0007669"/>
    <property type="project" value="InterPro"/>
</dbReference>
<dbReference type="GO" id="GO:0006741">
    <property type="term" value="P:NADP biosynthetic process"/>
    <property type="evidence" value="ECO:0007669"/>
    <property type="project" value="UniProtKB-UniRule"/>
</dbReference>
<dbReference type="Gene3D" id="3.40.50.10330">
    <property type="entry name" value="Probable inorganic polyphosphate/atp-NAD kinase, domain 1"/>
    <property type="match status" value="1"/>
</dbReference>
<dbReference type="Gene3D" id="2.60.200.30">
    <property type="entry name" value="Probable inorganic polyphosphate/atp-NAD kinase, domain 2"/>
    <property type="match status" value="1"/>
</dbReference>
<dbReference type="HAMAP" id="MF_00361">
    <property type="entry name" value="NAD_kinase"/>
    <property type="match status" value="1"/>
</dbReference>
<dbReference type="InterPro" id="IPR017438">
    <property type="entry name" value="ATP-NAD_kinase_N"/>
</dbReference>
<dbReference type="InterPro" id="IPR017437">
    <property type="entry name" value="ATP-NAD_kinase_PpnK-typ_C"/>
</dbReference>
<dbReference type="InterPro" id="IPR016064">
    <property type="entry name" value="NAD/diacylglycerol_kinase_sf"/>
</dbReference>
<dbReference type="InterPro" id="IPR002504">
    <property type="entry name" value="NADK"/>
</dbReference>
<dbReference type="PANTHER" id="PTHR20275:SF43">
    <property type="entry name" value="BIFUNCTIONAL NADP PHOSPHATASE_NAD KINASE"/>
    <property type="match status" value="1"/>
</dbReference>
<dbReference type="PANTHER" id="PTHR20275">
    <property type="entry name" value="NAD KINASE"/>
    <property type="match status" value="1"/>
</dbReference>
<dbReference type="Pfam" id="PF01513">
    <property type="entry name" value="NAD_kinase"/>
    <property type="match status" value="1"/>
</dbReference>
<dbReference type="Pfam" id="PF20143">
    <property type="entry name" value="NAD_kinase_C"/>
    <property type="match status" value="1"/>
</dbReference>
<dbReference type="SUPFAM" id="SSF111331">
    <property type="entry name" value="NAD kinase/diacylglycerol kinase-like"/>
    <property type="match status" value="1"/>
</dbReference>
<accession>A2SQJ8</accession>
<sequence>MKICIVSRIDLKEPVELAQSLGWMLRDQGHDVVYEQSVAAELGYAPVSLSKDFSADLIVVLGGDGSVLRTIRMLDHQVPVVGINQGQVGFLTDIERDKAEEILTSLSLPLPLDPRMRISIEFNGRSVGSALNEAVIVTSRPAKILKFAVFVNGRQIDEFRADGLIIGTPTGSTAYAMSAGGPIVDSTIEAMLLVPLAPYMLSSRPYLINSNSEVEIRLVSVKPALLVIDGQDQYEIGENATLLIRKSPDPALFVDVGRGFFDKVEQKLRLL</sequence>
<keyword id="KW-0067">ATP-binding</keyword>
<keyword id="KW-0963">Cytoplasm</keyword>
<keyword id="KW-0418">Kinase</keyword>
<keyword id="KW-0520">NAD</keyword>
<keyword id="KW-0521">NADP</keyword>
<keyword id="KW-0547">Nucleotide-binding</keyword>
<keyword id="KW-1185">Reference proteome</keyword>
<keyword id="KW-0808">Transferase</keyword>
<gene>
    <name evidence="1" type="primary">nadK</name>
    <name type="ordered locus">Mlab_0428</name>
</gene>
<proteinExistence type="inferred from homology"/>
<comment type="function">
    <text evidence="1">Involved in the regulation of the intracellular balance of NAD and NADP, and is a key enzyme in the biosynthesis of NADP. Catalyzes specifically the phosphorylation on 2'-hydroxyl of the adenosine moiety of NAD to yield NADP.</text>
</comment>
<comment type="catalytic activity">
    <reaction evidence="1">
        <text>NAD(+) + ATP = ADP + NADP(+) + H(+)</text>
        <dbReference type="Rhea" id="RHEA:18629"/>
        <dbReference type="ChEBI" id="CHEBI:15378"/>
        <dbReference type="ChEBI" id="CHEBI:30616"/>
        <dbReference type="ChEBI" id="CHEBI:57540"/>
        <dbReference type="ChEBI" id="CHEBI:58349"/>
        <dbReference type="ChEBI" id="CHEBI:456216"/>
        <dbReference type="EC" id="2.7.1.23"/>
    </reaction>
</comment>
<comment type="cofactor">
    <cofactor evidence="1">
        <name>a divalent metal cation</name>
        <dbReference type="ChEBI" id="CHEBI:60240"/>
    </cofactor>
</comment>
<comment type="subcellular location">
    <subcellularLocation>
        <location evidence="1">Cytoplasm</location>
    </subcellularLocation>
</comment>
<comment type="similarity">
    <text evidence="1">Belongs to the NAD kinase family.</text>
</comment>
<reference key="1">
    <citation type="journal article" date="2009" name="Stand. Genomic Sci.">
        <title>Complete genome sequence of Methanocorpusculum labreanum type strain Z.</title>
        <authorList>
            <person name="Anderson I.J."/>
            <person name="Sieprawska-Lupa M."/>
            <person name="Goltsman E."/>
            <person name="Lapidus A."/>
            <person name="Copeland A."/>
            <person name="Glavina Del Rio T."/>
            <person name="Tice H."/>
            <person name="Dalin E."/>
            <person name="Barry K."/>
            <person name="Pitluck S."/>
            <person name="Hauser L."/>
            <person name="Land M."/>
            <person name="Lucas S."/>
            <person name="Richardson P."/>
            <person name="Whitman W.B."/>
            <person name="Kyrpides N.C."/>
        </authorList>
    </citation>
    <scope>NUCLEOTIDE SEQUENCE [LARGE SCALE GENOMIC DNA]</scope>
    <source>
        <strain>ATCC 43576 / DSM 4855 / Z</strain>
    </source>
</reference>
<protein>
    <recommendedName>
        <fullName evidence="1">NAD kinase</fullName>
        <ecNumber evidence="1">2.7.1.23</ecNumber>
    </recommendedName>
    <alternativeName>
        <fullName evidence="1">ATP-dependent NAD kinase</fullName>
    </alternativeName>
</protein>
<evidence type="ECO:0000255" key="1">
    <source>
        <dbReference type="HAMAP-Rule" id="MF_00361"/>
    </source>
</evidence>